<keyword id="KW-0030">Aminoacyl-tRNA synthetase</keyword>
<keyword id="KW-0067">ATP-binding</keyword>
<keyword id="KW-0963">Cytoplasm</keyword>
<keyword id="KW-0436">Ligase</keyword>
<keyword id="KW-0479">Metal-binding</keyword>
<keyword id="KW-0547">Nucleotide-binding</keyword>
<keyword id="KW-0648">Protein biosynthesis</keyword>
<keyword id="KW-0862">Zinc</keyword>
<feature type="chain" id="PRO_0000159549" description="Cysteine--tRNA ligase">
    <location>
        <begin position="1"/>
        <end position="454"/>
    </location>
</feature>
<feature type="short sequence motif" description="'HIGH' region">
    <location>
        <begin position="29"/>
        <end position="39"/>
    </location>
</feature>
<feature type="short sequence motif" description="'KMSKS' region">
    <location>
        <begin position="265"/>
        <end position="269"/>
    </location>
</feature>
<feature type="binding site" evidence="1">
    <location>
        <position position="27"/>
    </location>
    <ligand>
        <name>Zn(2+)</name>
        <dbReference type="ChEBI" id="CHEBI:29105"/>
    </ligand>
</feature>
<feature type="binding site" evidence="1">
    <location>
        <position position="207"/>
    </location>
    <ligand>
        <name>Zn(2+)</name>
        <dbReference type="ChEBI" id="CHEBI:29105"/>
    </ligand>
</feature>
<feature type="binding site" evidence="1">
    <location>
        <position position="232"/>
    </location>
    <ligand>
        <name>Zn(2+)</name>
        <dbReference type="ChEBI" id="CHEBI:29105"/>
    </ligand>
</feature>
<feature type="binding site" evidence="1">
    <location>
        <position position="236"/>
    </location>
    <ligand>
        <name>Zn(2+)</name>
        <dbReference type="ChEBI" id="CHEBI:29105"/>
    </ligand>
</feature>
<feature type="binding site" evidence="1">
    <location>
        <position position="268"/>
    </location>
    <ligand>
        <name>ATP</name>
        <dbReference type="ChEBI" id="CHEBI:30616"/>
    </ligand>
</feature>
<gene>
    <name evidence="1" type="primary">cysS</name>
    <name type="ordered locus">TV1267</name>
    <name type="ORF">TVG1307912</name>
</gene>
<proteinExistence type="inferred from homology"/>
<comment type="catalytic activity">
    <reaction evidence="1">
        <text>tRNA(Cys) + L-cysteine + ATP = L-cysteinyl-tRNA(Cys) + AMP + diphosphate</text>
        <dbReference type="Rhea" id="RHEA:17773"/>
        <dbReference type="Rhea" id="RHEA-COMP:9661"/>
        <dbReference type="Rhea" id="RHEA-COMP:9679"/>
        <dbReference type="ChEBI" id="CHEBI:30616"/>
        <dbReference type="ChEBI" id="CHEBI:33019"/>
        <dbReference type="ChEBI" id="CHEBI:35235"/>
        <dbReference type="ChEBI" id="CHEBI:78442"/>
        <dbReference type="ChEBI" id="CHEBI:78517"/>
        <dbReference type="ChEBI" id="CHEBI:456215"/>
        <dbReference type="EC" id="6.1.1.16"/>
    </reaction>
</comment>
<comment type="cofactor">
    <cofactor evidence="1">
        <name>Zn(2+)</name>
        <dbReference type="ChEBI" id="CHEBI:29105"/>
    </cofactor>
    <text evidence="1">Binds 1 zinc ion per subunit.</text>
</comment>
<comment type="subcellular location">
    <subcellularLocation>
        <location evidence="1">Cytoplasm</location>
    </subcellularLocation>
</comment>
<comment type="similarity">
    <text evidence="1">Belongs to the class-I aminoacyl-tRNA synthetase family.</text>
</comment>
<comment type="sequence caution" evidence="2">
    <conflict type="erroneous initiation">
        <sequence resource="EMBL-CDS" id="BAB60409"/>
    </conflict>
</comment>
<name>SYC_THEVO</name>
<dbReference type="EC" id="6.1.1.16" evidence="1"/>
<dbReference type="EMBL" id="BA000011">
    <property type="protein sequence ID" value="BAB60409.1"/>
    <property type="status" value="ALT_INIT"/>
    <property type="molecule type" value="Genomic_DNA"/>
</dbReference>
<dbReference type="SMR" id="Q978Z5"/>
<dbReference type="STRING" id="273116.gene:9382072"/>
<dbReference type="PaxDb" id="273116-14325506"/>
<dbReference type="KEGG" id="tvo:TVG1307912"/>
<dbReference type="eggNOG" id="arCOG00486">
    <property type="taxonomic scope" value="Archaea"/>
</dbReference>
<dbReference type="HOGENOM" id="CLU_013528_0_1_2"/>
<dbReference type="OrthoDB" id="9445at2157"/>
<dbReference type="PhylomeDB" id="Q978Z5"/>
<dbReference type="Proteomes" id="UP000001017">
    <property type="component" value="Chromosome"/>
</dbReference>
<dbReference type="GO" id="GO:0005737">
    <property type="term" value="C:cytoplasm"/>
    <property type="evidence" value="ECO:0007669"/>
    <property type="project" value="UniProtKB-SubCell"/>
</dbReference>
<dbReference type="GO" id="GO:0005524">
    <property type="term" value="F:ATP binding"/>
    <property type="evidence" value="ECO:0007669"/>
    <property type="project" value="UniProtKB-UniRule"/>
</dbReference>
<dbReference type="GO" id="GO:0004817">
    <property type="term" value="F:cysteine-tRNA ligase activity"/>
    <property type="evidence" value="ECO:0007669"/>
    <property type="project" value="UniProtKB-UniRule"/>
</dbReference>
<dbReference type="GO" id="GO:0046872">
    <property type="term" value="F:metal ion binding"/>
    <property type="evidence" value="ECO:0007669"/>
    <property type="project" value="UniProtKB-KW"/>
</dbReference>
<dbReference type="GO" id="GO:0006423">
    <property type="term" value="P:cysteinyl-tRNA aminoacylation"/>
    <property type="evidence" value="ECO:0007669"/>
    <property type="project" value="UniProtKB-UniRule"/>
</dbReference>
<dbReference type="CDD" id="cd00672">
    <property type="entry name" value="CysRS_core"/>
    <property type="match status" value="1"/>
</dbReference>
<dbReference type="FunFam" id="3.40.50.620:FF:000130">
    <property type="entry name" value="Cysteine--tRNA ligase"/>
    <property type="match status" value="1"/>
</dbReference>
<dbReference type="Gene3D" id="1.20.120.1910">
    <property type="entry name" value="Cysteine-tRNA ligase, C-terminal anti-codon recognition domain"/>
    <property type="match status" value="1"/>
</dbReference>
<dbReference type="Gene3D" id="3.40.50.620">
    <property type="entry name" value="HUPs"/>
    <property type="match status" value="1"/>
</dbReference>
<dbReference type="HAMAP" id="MF_00041">
    <property type="entry name" value="Cys_tRNA_synth"/>
    <property type="match status" value="1"/>
</dbReference>
<dbReference type="InterPro" id="IPR015803">
    <property type="entry name" value="Cys-tRNA-ligase"/>
</dbReference>
<dbReference type="InterPro" id="IPR024909">
    <property type="entry name" value="Cys-tRNA/MSH_ligase"/>
</dbReference>
<dbReference type="InterPro" id="IPR014729">
    <property type="entry name" value="Rossmann-like_a/b/a_fold"/>
</dbReference>
<dbReference type="InterPro" id="IPR032678">
    <property type="entry name" value="tRNA-synt_1_cat_dom"/>
</dbReference>
<dbReference type="InterPro" id="IPR009080">
    <property type="entry name" value="tRNAsynth_Ia_anticodon-bd"/>
</dbReference>
<dbReference type="NCBIfam" id="TIGR00435">
    <property type="entry name" value="cysS"/>
    <property type="match status" value="1"/>
</dbReference>
<dbReference type="PANTHER" id="PTHR10890:SF3">
    <property type="entry name" value="CYSTEINE--TRNA LIGASE, CYTOPLASMIC"/>
    <property type="match status" value="1"/>
</dbReference>
<dbReference type="PANTHER" id="PTHR10890">
    <property type="entry name" value="CYSTEINYL-TRNA SYNTHETASE"/>
    <property type="match status" value="1"/>
</dbReference>
<dbReference type="Pfam" id="PF01406">
    <property type="entry name" value="tRNA-synt_1e"/>
    <property type="match status" value="1"/>
</dbReference>
<dbReference type="PRINTS" id="PR00983">
    <property type="entry name" value="TRNASYNTHCYS"/>
</dbReference>
<dbReference type="SUPFAM" id="SSF47323">
    <property type="entry name" value="Anticodon-binding domain of a subclass of class I aminoacyl-tRNA synthetases"/>
    <property type="match status" value="1"/>
</dbReference>
<dbReference type="SUPFAM" id="SSF52374">
    <property type="entry name" value="Nucleotidylyl transferase"/>
    <property type="match status" value="1"/>
</dbReference>
<organism>
    <name type="scientific">Thermoplasma volcanium (strain ATCC 51530 / DSM 4299 / JCM 9571 / NBRC 15438 / GSS1)</name>
    <dbReference type="NCBI Taxonomy" id="273116"/>
    <lineage>
        <taxon>Archaea</taxon>
        <taxon>Methanobacteriati</taxon>
        <taxon>Thermoplasmatota</taxon>
        <taxon>Thermoplasmata</taxon>
        <taxon>Thermoplasmatales</taxon>
        <taxon>Thermoplasmataceae</taxon>
        <taxon>Thermoplasma</taxon>
    </lineage>
</organism>
<reference key="1">
    <citation type="journal article" date="2000" name="Proc. Natl. Acad. Sci. U.S.A.">
        <title>Archaeal adaptation to higher temperatures revealed by genomic sequence of Thermoplasma volcanium.</title>
        <authorList>
            <person name="Kawashima T."/>
            <person name="Amano N."/>
            <person name="Koike H."/>
            <person name="Makino S."/>
            <person name="Higuchi S."/>
            <person name="Kawashima-Ohya Y."/>
            <person name="Watanabe K."/>
            <person name="Yamazaki M."/>
            <person name="Kanehori K."/>
            <person name="Kawamoto T."/>
            <person name="Nunoshiba T."/>
            <person name="Yamamoto Y."/>
            <person name="Aramaki H."/>
            <person name="Makino K."/>
            <person name="Suzuki M."/>
        </authorList>
    </citation>
    <scope>NUCLEOTIDE SEQUENCE [LARGE SCALE GENOMIC DNA]</scope>
    <source>
        <strain>ATCC 51530 / DSM 4299 / JCM 9571 / NBRC 15438 / GSS1</strain>
    </source>
</reference>
<sequence length="454" mass="53231">MLIYNTLTRRLQEFNEMHRGRVNLFVCGPTVQDHFHIGHARTYIFFDAVAKFLKLEGYSVFYLQNITDIDDKIINRAKEMGIEPSEVAKIYFSEFQEDMKRLKVDSVNFFARATLYIDEIVSQISRMMEKGYAYETDDGVYFEVRKFKDYGELSNQSLDQIIAGYRVAVNENKRNPEDFVLWKKKKAGEPSWPSPWGEGRPGWHIEDTAITETYFGDEYDIHGGGSDLIFPHHEAEIAQMRSISGKRYLAHYWIHTGMININKEKMSKSLKNFITIRDILKDYRPEDLRFAILNANYRTQIEFSKELMEESKKLIDYINDTYRKLEYVNGSGNFKIDVNSVISEMRSLAENDFDFHSVIVKLLAITGEINRNFEGINKEVAEELKKVYLWVDTFLGILEQKKEVSKGIVDDLVELRTRMRKEKNFLISDAIRDVLKKNGIHIEDRGDVTVWWQE</sequence>
<evidence type="ECO:0000255" key="1">
    <source>
        <dbReference type="HAMAP-Rule" id="MF_00041"/>
    </source>
</evidence>
<evidence type="ECO:0000305" key="2"/>
<protein>
    <recommendedName>
        <fullName evidence="1">Cysteine--tRNA ligase</fullName>
        <ecNumber evidence="1">6.1.1.16</ecNumber>
    </recommendedName>
    <alternativeName>
        <fullName evidence="1">Cysteinyl-tRNA synthetase</fullName>
        <shortName evidence="1">CysRS</shortName>
    </alternativeName>
</protein>
<accession>Q978Z5</accession>